<dbReference type="EC" id="2.1.1.166" evidence="1"/>
<dbReference type="EMBL" id="CU928145">
    <property type="protein sequence ID" value="CAU99813.1"/>
    <property type="molecule type" value="Genomic_DNA"/>
</dbReference>
<dbReference type="RefSeq" id="WP_000145975.1">
    <property type="nucleotide sequence ID" value="NZ_CP028304.1"/>
</dbReference>
<dbReference type="SMR" id="B7LHP2"/>
<dbReference type="GeneID" id="93778802"/>
<dbReference type="KEGG" id="eck:EC55989_3597"/>
<dbReference type="HOGENOM" id="CLU_009422_4_0_6"/>
<dbReference type="Proteomes" id="UP000000746">
    <property type="component" value="Chromosome"/>
</dbReference>
<dbReference type="GO" id="GO:0005737">
    <property type="term" value="C:cytoplasm"/>
    <property type="evidence" value="ECO:0007669"/>
    <property type="project" value="UniProtKB-SubCell"/>
</dbReference>
<dbReference type="GO" id="GO:0008650">
    <property type="term" value="F:rRNA (uridine-2'-O-)-methyltransferase activity"/>
    <property type="evidence" value="ECO:0007669"/>
    <property type="project" value="UniProtKB-UniRule"/>
</dbReference>
<dbReference type="CDD" id="cd02440">
    <property type="entry name" value="AdoMet_MTases"/>
    <property type="match status" value="1"/>
</dbReference>
<dbReference type="FunFam" id="3.40.50.150:FF:000005">
    <property type="entry name" value="Ribosomal RNA large subunit methyltransferase E"/>
    <property type="match status" value="1"/>
</dbReference>
<dbReference type="Gene3D" id="3.40.50.150">
    <property type="entry name" value="Vaccinia Virus protein VP39"/>
    <property type="match status" value="1"/>
</dbReference>
<dbReference type="HAMAP" id="MF_01547">
    <property type="entry name" value="RNA_methyltr_E"/>
    <property type="match status" value="1"/>
</dbReference>
<dbReference type="InterPro" id="IPR050082">
    <property type="entry name" value="RNA_methyltr_RlmE"/>
</dbReference>
<dbReference type="InterPro" id="IPR002877">
    <property type="entry name" value="RNA_MeTrfase_FtsJ_dom"/>
</dbReference>
<dbReference type="InterPro" id="IPR015507">
    <property type="entry name" value="rRNA-MeTfrase_E"/>
</dbReference>
<dbReference type="InterPro" id="IPR004512">
    <property type="entry name" value="rRNA_MeTrfase_gammaproteobac"/>
</dbReference>
<dbReference type="InterPro" id="IPR029063">
    <property type="entry name" value="SAM-dependent_MTases_sf"/>
</dbReference>
<dbReference type="NCBIfam" id="NF008390">
    <property type="entry name" value="PRK11188.1"/>
    <property type="match status" value="1"/>
</dbReference>
<dbReference type="NCBIfam" id="TIGR00438">
    <property type="entry name" value="rrmJ"/>
    <property type="match status" value="1"/>
</dbReference>
<dbReference type="PANTHER" id="PTHR10920">
    <property type="entry name" value="RIBOSOMAL RNA METHYLTRANSFERASE"/>
    <property type="match status" value="1"/>
</dbReference>
<dbReference type="PANTHER" id="PTHR10920:SF18">
    <property type="entry name" value="RRNA METHYLTRANSFERASE 2, MITOCHONDRIAL"/>
    <property type="match status" value="1"/>
</dbReference>
<dbReference type="Pfam" id="PF01728">
    <property type="entry name" value="FtsJ"/>
    <property type="match status" value="1"/>
</dbReference>
<dbReference type="PIRSF" id="PIRSF005461">
    <property type="entry name" value="23S_rRNA_mtase"/>
    <property type="match status" value="1"/>
</dbReference>
<dbReference type="SUPFAM" id="SSF53335">
    <property type="entry name" value="S-adenosyl-L-methionine-dependent methyltransferases"/>
    <property type="match status" value="1"/>
</dbReference>
<gene>
    <name evidence="1" type="primary">rlmE</name>
    <name evidence="1" type="synonym">ftsJ</name>
    <name evidence="1" type="synonym">rrmJ</name>
    <name type="ordered locus">EC55989_3597</name>
</gene>
<reference key="1">
    <citation type="journal article" date="2009" name="PLoS Genet.">
        <title>Organised genome dynamics in the Escherichia coli species results in highly diverse adaptive paths.</title>
        <authorList>
            <person name="Touchon M."/>
            <person name="Hoede C."/>
            <person name="Tenaillon O."/>
            <person name="Barbe V."/>
            <person name="Baeriswyl S."/>
            <person name="Bidet P."/>
            <person name="Bingen E."/>
            <person name="Bonacorsi S."/>
            <person name="Bouchier C."/>
            <person name="Bouvet O."/>
            <person name="Calteau A."/>
            <person name="Chiapello H."/>
            <person name="Clermont O."/>
            <person name="Cruveiller S."/>
            <person name="Danchin A."/>
            <person name="Diard M."/>
            <person name="Dossat C."/>
            <person name="Karoui M.E."/>
            <person name="Frapy E."/>
            <person name="Garry L."/>
            <person name="Ghigo J.M."/>
            <person name="Gilles A.M."/>
            <person name="Johnson J."/>
            <person name="Le Bouguenec C."/>
            <person name="Lescat M."/>
            <person name="Mangenot S."/>
            <person name="Martinez-Jehanne V."/>
            <person name="Matic I."/>
            <person name="Nassif X."/>
            <person name="Oztas S."/>
            <person name="Petit M.A."/>
            <person name="Pichon C."/>
            <person name="Rouy Z."/>
            <person name="Ruf C.S."/>
            <person name="Schneider D."/>
            <person name="Tourret J."/>
            <person name="Vacherie B."/>
            <person name="Vallenet D."/>
            <person name="Medigue C."/>
            <person name="Rocha E.P.C."/>
            <person name="Denamur E."/>
        </authorList>
    </citation>
    <scope>NUCLEOTIDE SEQUENCE [LARGE SCALE GENOMIC DNA]</scope>
    <source>
        <strain>55989 / EAEC</strain>
    </source>
</reference>
<organism>
    <name type="scientific">Escherichia coli (strain 55989 / EAEC)</name>
    <dbReference type="NCBI Taxonomy" id="585055"/>
    <lineage>
        <taxon>Bacteria</taxon>
        <taxon>Pseudomonadati</taxon>
        <taxon>Pseudomonadota</taxon>
        <taxon>Gammaproteobacteria</taxon>
        <taxon>Enterobacterales</taxon>
        <taxon>Enterobacteriaceae</taxon>
        <taxon>Escherichia</taxon>
    </lineage>
</organism>
<accession>B7LHP2</accession>
<sequence length="209" mass="23335">MTGKKRSASSSRWLQEHFSDKYVQQAQKKGLRSRAWFKLDEIQQSDKLFKPGMTVVDLGAAPGGWSQYVVTQIGGKGRIIACDLLPMDPIVGVDFLQGDFRDELVMKALLERVGDSKVQVVMSDMAPNMSGTPAVDIPRAMYLVELALEMCRDVLAPGGSFVVKVFQGEGFDEYLREIRSLFTKVKVRKPDSSRARSREVYIVATGRKP</sequence>
<feature type="chain" id="PRO_1000185295" description="Ribosomal RNA large subunit methyltransferase E">
    <location>
        <begin position="1"/>
        <end position="209"/>
    </location>
</feature>
<feature type="active site" description="Proton acceptor" evidence="1">
    <location>
        <position position="164"/>
    </location>
</feature>
<feature type="binding site" evidence="1">
    <location>
        <position position="63"/>
    </location>
    <ligand>
        <name>S-adenosyl-L-methionine</name>
        <dbReference type="ChEBI" id="CHEBI:59789"/>
    </ligand>
</feature>
<feature type="binding site" evidence="1">
    <location>
        <position position="65"/>
    </location>
    <ligand>
        <name>S-adenosyl-L-methionine</name>
        <dbReference type="ChEBI" id="CHEBI:59789"/>
    </ligand>
</feature>
<feature type="binding site" evidence="1">
    <location>
        <position position="83"/>
    </location>
    <ligand>
        <name>S-adenosyl-L-methionine</name>
        <dbReference type="ChEBI" id="CHEBI:59789"/>
    </ligand>
</feature>
<feature type="binding site" evidence="1">
    <location>
        <position position="99"/>
    </location>
    <ligand>
        <name>S-adenosyl-L-methionine</name>
        <dbReference type="ChEBI" id="CHEBI:59789"/>
    </ligand>
</feature>
<feature type="binding site" evidence="1">
    <location>
        <position position="124"/>
    </location>
    <ligand>
        <name>S-adenosyl-L-methionine</name>
        <dbReference type="ChEBI" id="CHEBI:59789"/>
    </ligand>
</feature>
<protein>
    <recommendedName>
        <fullName evidence="1">Ribosomal RNA large subunit methyltransferase E</fullName>
        <ecNumber evidence="1">2.1.1.166</ecNumber>
    </recommendedName>
    <alternativeName>
        <fullName evidence="1">23S rRNA Um2552 methyltransferase</fullName>
    </alternativeName>
    <alternativeName>
        <fullName evidence="1">rRNA (uridine-2'-O-)-methyltransferase</fullName>
    </alternativeName>
</protein>
<name>RLME_ECO55</name>
<keyword id="KW-0963">Cytoplasm</keyword>
<keyword id="KW-0489">Methyltransferase</keyword>
<keyword id="KW-1185">Reference proteome</keyword>
<keyword id="KW-0698">rRNA processing</keyword>
<keyword id="KW-0949">S-adenosyl-L-methionine</keyword>
<keyword id="KW-0808">Transferase</keyword>
<proteinExistence type="inferred from homology"/>
<comment type="function">
    <text evidence="1">Specifically methylates the uridine in position 2552 of 23S rRNA at the 2'-O position of the ribose in the fully assembled 50S ribosomal subunit.</text>
</comment>
<comment type="catalytic activity">
    <reaction evidence="1">
        <text>uridine(2552) in 23S rRNA + S-adenosyl-L-methionine = 2'-O-methyluridine(2552) in 23S rRNA + S-adenosyl-L-homocysteine + H(+)</text>
        <dbReference type="Rhea" id="RHEA:42720"/>
        <dbReference type="Rhea" id="RHEA-COMP:10202"/>
        <dbReference type="Rhea" id="RHEA-COMP:10203"/>
        <dbReference type="ChEBI" id="CHEBI:15378"/>
        <dbReference type="ChEBI" id="CHEBI:57856"/>
        <dbReference type="ChEBI" id="CHEBI:59789"/>
        <dbReference type="ChEBI" id="CHEBI:65315"/>
        <dbReference type="ChEBI" id="CHEBI:74478"/>
        <dbReference type="EC" id="2.1.1.166"/>
    </reaction>
</comment>
<comment type="subcellular location">
    <subcellularLocation>
        <location evidence="1">Cytoplasm</location>
    </subcellularLocation>
</comment>
<comment type="similarity">
    <text evidence="1">Belongs to the class I-like SAM-binding methyltransferase superfamily. RNA methyltransferase RlmE family.</text>
</comment>
<evidence type="ECO:0000255" key="1">
    <source>
        <dbReference type="HAMAP-Rule" id="MF_01547"/>
    </source>
</evidence>